<feature type="signal peptide" evidence="3">
    <location>
        <begin position="1"/>
        <end position="16"/>
    </location>
</feature>
<feature type="chain" id="PRO_5007639121" description="AA9 family lytic polysaccharide monooxygenase C">
    <location>
        <begin position="17"/>
        <end position="287"/>
    </location>
</feature>
<feature type="binding site" evidence="1">
    <location>
        <position position="17"/>
    </location>
    <ligand>
        <name>Cu(2+)</name>
        <dbReference type="ChEBI" id="CHEBI:29036"/>
        <note>catalytic</note>
    </ligand>
</feature>
<feature type="binding site" evidence="1">
    <location>
        <position position="114"/>
    </location>
    <ligand>
        <name>Cu(2+)</name>
        <dbReference type="ChEBI" id="CHEBI:29036"/>
        <note>catalytic</note>
    </ligand>
</feature>
<feature type="binding site" evidence="1">
    <location>
        <position position="216"/>
    </location>
    <ligand>
        <name>O2</name>
        <dbReference type="ChEBI" id="CHEBI:15379"/>
    </ligand>
</feature>
<feature type="binding site" evidence="1">
    <location>
        <position position="225"/>
    </location>
    <ligand>
        <name>O2</name>
        <dbReference type="ChEBI" id="CHEBI:15379"/>
    </ligand>
</feature>
<feature type="binding site" evidence="1">
    <location>
        <position position="227"/>
    </location>
    <ligand>
        <name>Cu(2+)</name>
        <dbReference type="ChEBI" id="CHEBI:29036"/>
        <note>catalytic</note>
    </ligand>
</feature>
<feature type="glycosylation site" description="N-linked (GlcNAc...) asparagine" evidence="4">
    <location>
        <position position="22"/>
    </location>
</feature>
<feature type="disulfide bond" evidence="2">
    <location>
        <begin position="77"/>
        <end position="230"/>
    </location>
</feature>
<feature type="disulfide bond" evidence="2">
    <location>
        <begin position="200"/>
        <end position="284"/>
    </location>
</feature>
<keyword id="KW-0119">Carbohydrate metabolism</keyword>
<keyword id="KW-0136">Cellulose degradation</keyword>
<keyword id="KW-0186">Copper</keyword>
<keyword id="KW-1015">Disulfide bond</keyword>
<keyword id="KW-0325">Glycoprotein</keyword>
<keyword id="KW-0479">Metal-binding</keyword>
<keyword id="KW-0503">Monooxygenase</keyword>
<keyword id="KW-0560">Oxidoreductase</keyword>
<keyword id="KW-0624">Polysaccharide degradation</keyword>
<keyword id="KW-1185">Reference proteome</keyword>
<keyword id="KW-0964">Secreted</keyword>
<keyword id="KW-0732">Signal</keyword>
<reference key="1">
    <citation type="journal article" date="2008" name="Genome Biol.">
        <title>The genome sequence of the model ascomycete fungus Podospora anserina.</title>
        <authorList>
            <person name="Espagne E."/>
            <person name="Lespinet O."/>
            <person name="Malagnac F."/>
            <person name="Da Silva C."/>
            <person name="Jaillon O."/>
            <person name="Porcel B.M."/>
            <person name="Couloux A."/>
            <person name="Aury J.-M."/>
            <person name="Segurens B."/>
            <person name="Poulain J."/>
            <person name="Anthouard V."/>
            <person name="Grossetete S."/>
            <person name="Khalili H."/>
            <person name="Coppin E."/>
            <person name="Dequard-Chablat M."/>
            <person name="Picard M."/>
            <person name="Contamine V."/>
            <person name="Arnaise S."/>
            <person name="Bourdais A."/>
            <person name="Berteaux-Lecellier V."/>
            <person name="Gautheret D."/>
            <person name="de Vries R.P."/>
            <person name="Battaglia E."/>
            <person name="Coutinho P.M."/>
            <person name="Danchin E.G.J."/>
            <person name="Henrissat B."/>
            <person name="El Khoury R."/>
            <person name="Sainsard-Chanet A."/>
            <person name="Boivin A."/>
            <person name="Pinan-Lucarre B."/>
            <person name="Sellem C.H."/>
            <person name="Debuchy R."/>
            <person name="Wincker P."/>
            <person name="Weissenbach J."/>
            <person name="Silar P."/>
        </authorList>
    </citation>
    <scope>NUCLEOTIDE SEQUENCE [LARGE SCALE GENOMIC DNA]</scope>
    <source>
        <strain>S / ATCC MYA-4624 / DSM 980 / FGSC 10383</strain>
    </source>
</reference>
<reference key="2">
    <citation type="journal article" date="2014" name="Genetics">
        <title>Maintaining two mating types: Structure of the mating type locus and its role in heterokaryosis in Podospora anserina.</title>
        <authorList>
            <person name="Grognet P."/>
            <person name="Bidard F."/>
            <person name="Kuchly C."/>
            <person name="Tong L.C.H."/>
            <person name="Coppin E."/>
            <person name="Benkhali J.A."/>
            <person name="Couloux A."/>
            <person name="Wincker P."/>
            <person name="Debuchy R."/>
            <person name="Silar P."/>
        </authorList>
    </citation>
    <scope>GENOME REANNOTATION</scope>
    <source>
        <strain>S / ATCC MYA-4624 / DSM 980 / FGSC 10383</strain>
    </source>
</reference>
<reference key="3">
    <citation type="journal article" date="2015" name="Biotechnol. Biofuels">
        <title>Substrate specificity and regioselectivity of fungal AA9 lytic polysaccharide monooxygenases secreted by Podospora anserina.</title>
        <authorList>
            <person name="Bennati-Granier C."/>
            <person name="Garajova S."/>
            <person name="Champion C."/>
            <person name="Grisel S."/>
            <person name="Haon M."/>
            <person name="Zhou S."/>
            <person name="Fanuel M."/>
            <person name="Ropartz D."/>
            <person name="Rogniaux H."/>
            <person name="Gimbert I."/>
            <person name="Record E."/>
            <person name="Berrin J.G."/>
        </authorList>
    </citation>
    <scope>FUNCTION</scope>
</reference>
<comment type="function">
    <text evidence="7">Lytic polysaccharide monooxygenase (LPMO) that depolymerizes crystalline and amorphous polysaccharides via the oxidation of scissile alpha- or beta-(1-4)-glycosidic bonds, yielding C1 or C4 oxidation products (Probable). Catalysis by LPMOs requires the reduction of the active-site copper from Cu(II) to Cu(I) by a reducing agent and H(2)O(2) or O(2) as a cosubstrate (Probable).</text>
</comment>
<comment type="catalytic activity">
    <reaction evidence="7">
        <text>[(1-&gt;4)-beta-D-glucosyl]n+m + reduced acceptor + O2 = 4-dehydro-beta-D-glucosyl-[(1-&gt;4)-beta-D-glucosyl]n-1 + [(1-&gt;4)-beta-D-glucosyl]m + acceptor + H2O.</text>
        <dbReference type="EC" id="1.14.99.56"/>
    </reaction>
</comment>
<comment type="cofactor">
    <cofactor evidence="1">
        <name>Cu(2+)</name>
        <dbReference type="ChEBI" id="CHEBI:29036"/>
    </cofactor>
    <text evidence="1">Binds 1 copper ion per subunit.</text>
</comment>
<comment type="subcellular location">
    <subcellularLocation>
        <location evidence="7">Secreted</location>
    </subcellularLocation>
</comment>
<comment type="biotechnology">
    <text evidence="7">Lignocellulose is the most abundant polymeric composite on Earth and is a recalcitrant but promising renewable substrate for industrial biotechnology applications. Together with cellobiose dehydrogenases (CDHs) an enzymatic system capable of oxidative cellulose cleavage is formed, which increases the efficiency of cellulases and put LPMOs at focus of biofuel research.</text>
</comment>
<comment type="similarity">
    <text evidence="6">Belongs to the polysaccharide monooxygenase AA9 family.</text>
</comment>
<dbReference type="EC" id="1.14.99.56" evidence="7"/>
<dbReference type="EMBL" id="CU633900">
    <property type="protein sequence ID" value="CAP68173.1"/>
    <property type="molecule type" value="Genomic_DNA"/>
</dbReference>
<dbReference type="EMBL" id="FO904942">
    <property type="protein sequence ID" value="CDP31642.1"/>
    <property type="molecule type" value="Genomic_DNA"/>
</dbReference>
<dbReference type="RefSeq" id="XP_001907502.1">
    <property type="nucleotide sequence ID" value="XM_001907467.1"/>
</dbReference>
<dbReference type="SMR" id="B2AUV0"/>
<dbReference type="STRING" id="515849.B2AUV0"/>
<dbReference type="CAZy" id="AA9">
    <property type="family name" value="Auxiliary Activities 9"/>
</dbReference>
<dbReference type="GeneID" id="6192256"/>
<dbReference type="KEGG" id="pan:PODANSg4535"/>
<dbReference type="VEuPathDB" id="FungiDB:PODANS_7_5030"/>
<dbReference type="eggNOG" id="ENOG502QVRD">
    <property type="taxonomic scope" value="Eukaryota"/>
</dbReference>
<dbReference type="HOGENOM" id="CLU_031730_1_1_1"/>
<dbReference type="OrthoDB" id="4849160at2759"/>
<dbReference type="Proteomes" id="UP000001197">
    <property type="component" value="Chromosome 7"/>
</dbReference>
<dbReference type="GO" id="GO:0005576">
    <property type="term" value="C:extracellular region"/>
    <property type="evidence" value="ECO:0007669"/>
    <property type="project" value="UniProtKB-SubCell"/>
</dbReference>
<dbReference type="GO" id="GO:0046872">
    <property type="term" value="F:metal ion binding"/>
    <property type="evidence" value="ECO:0007669"/>
    <property type="project" value="UniProtKB-KW"/>
</dbReference>
<dbReference type="GO" id="GO:0004497">
    <property type="term" value="F:monooxygenase activity"/>
    <property type="evidence" value="ECO:0007669"/>
    <property type="project" value="UniProtKB-KW"/>
</dbReference>
<dbReference type="GO" id="GO:0030245">
    <property type="term" value="P:cellulose catabolic process"/>
    <property type="evidence" value="ECO:0007669"/>
    <property type="project" value="UniProtKB-KW"/>
</dbReference>
<dbReference type="CDD" id="cd21175">
    <property type="entry name" value="LPMO_AA9"/>
    <property type="match status" value="1"/>
</dbReference>
<dbReference type="Gene3D" id="2.70.50.70">
    <property type="match status" value="1"/>
</dbReference>
<dbReference type="InterPro" id="IPR049892">
    <property type="entry name" value="AA9"/>
</dbReference>
<dbReference type="InterPro" id="IPR005103">
    <property type="entry name" value="AA9_LPMO"/>
</dbReference>
<dbReference type="PANTHER" id="PTHR33353:SF6">
    <property type="entry name" value="ENDOGLUCANASE IV"/>
    <property type="match status" value="1"/>
</dbReference>
<dbReference type="PANTHER" id="PTHR33353">
    <property type="entry name" value="PUTATIVE (AFU_ORTHOLOGUE AFUA_1G12560)-RELATED"/>
    <property type="match status" value="1"/>
</dbReference>
<dbReference type="Pfam" id="PF03443">
    <property type="entry name" value="AA9"/>
    <property type="match status" value="1"/>
</dbReference>
<accession>B2AUV0</accession>
<gene>
    <name evidence="5" type="primary">LPMO9C</name>
    <name type="ORF">PODANS_7_5030</name>
</gene>
<name>LP9C_PODAN</name>
<protein>
    <recommendedName>
        <fullName evidence="5">AA9 family lytic polysaccharide monooxygenase C</fullName>
        <shortName evidence="5">LPMO9C</shortName>
        <ecNumber evidence="7">1.14.99.56</ecNumber>
    </recommendedName>
    <alternativeName>
        <fullName evidence="6">Cellulase LPMO9C</fullName>
    </alternativeName>
    <alternativeName>
        <fullName evidence="6">Endo-beta-1,4-glucanase LPMO9C</fullName>
        <shortName evidence="6">Endoglucanase LPMO9C</shortName>
    </alternativeName>
    <alternativeName>
        <fullName evidence="6">Glycosyl hydrolase 61 family protein LPMO9C</fullName>
    </alternativeName>
</protein>
<organism>
    <name type="scientific">Podospora anserina (strain S / ATCC MYA-4624 / DSM 980 / FGSC 10383)</name>
    <name type="common">Pleurage anserina</name>
    <dbReference type="NCBI Taxonomy" id="515849"/>
    <lineage>
        <taxon>Eukaryota</taxon>
        <taxon>Fungi</taxon>
        <taxon>Dikarya</taxon>
        <taxon>Ascomycota</taxon>
        <taxon>Pezizomycotina</taxon>
        <taxon>Sordariomycetes</taxon>
        <taxon>Sordariomycetidae</taxon>
        <taxon>Sordariales</taxon>
        <taxon>Podosporaceae</taxon>
        <taxon>Podospora</taxon>
        <taxon>Podospora anserina</taxon>
    </lineage>
</organism>
<evidence type="ECO:0000250" key="1">
    <source>
        <dbReference type="UniProtKB" id="Q1K8B6"/>
    </source>
</evidence>
<evidence type="ECO:0000250" key="2">
    <source>
        <dbReference type="UniProtKB" id="Q4WP32"/>
    </source>
</evidence>
<evidence type="ECO:0000255" key="3"/>
<evidence type="ECO:0000255" key="4">
    <source>
        <dbReference type="PROSITE-ProRule" id="PRU00498"/>
    </source>
</evidence>
<evidence type="ECO:0000303" key="5">
    <source>
    </source>
</evidence>
<evidence type="ECO:0000305" key="6"/>
<evidence type="ECO:0000305" key="7">
    <source>
    </source>
</evidence>
<sequence>MKSVLVALATATAVSAHGWVDNITISGQFYQVPLHSLDHENLPYQDPYMGEWAPKRISRKIITNGPVEDVTSIDLQCGGSTIEGQIGSEPAPLHAKAVAGSEVSLRWTHWPDSHMGPVLTYMARCPDSGCDKFLPGDEPIWFKIHHEGRHTFDKTWPDDIWATVSIAQHHITSILSFLTLEQTPFMKFDNEPYRYTIPECLKPGFYLVRHEIIALHSAWAAKGAQFYPSCHQLEVSGSGSVVPSASNAELVGFPGAYDAEDPSILFQVWAPGPYNIPGPAVFECPAQ</sequence>
<proteinExistence type="inferred from homology"/>